<name>DHE3_ARATH</name>
<feature type="chain" id="PRO_0000182747" description="Probable glutamate dehydrogenase 3">
    <location>
        <begin position="1"/>
        <end position="411"/>
    </location>
</feature>
<feature type="active site" evidence="1">
    <location>
        <position position="102"/>
    </location>
</feature>
<gene>
    <name type="primary">GSH3</name>
    <name type="ordered locus">At3g03910</name>
    <name type="ORF">F20H23.4</name>
    <name type="ORF">T11I18.2</name>
</gene>
<evidence type="ECO:0000255" key="1">
    <source>
        <dbReference type="PROSITE-ProRule" id="PRU10011"/>
    </source>
</evidence>
<evidence type="ECO:0000305" key="2"/>
<sequence length="411" mass="44528">MNALAATNRNFKLASRLLGLDSKLEKSLLIPFREIKVECTIPKDDGTLASFVGFRVQHDNARGPMKGGIRYHPEVEPDEVNALAQLMTWKTAVAKIPYGGAKGGIGCDPSELSLSELERLTRVFTQKIHDLIGIHTDVPAPDMGTGPQTMAWILDEYSKFHGHSPAVVTGKPIDLGGSLGRDAATGRGVLFATEALLNEHGKTISGQRFAIQGFGNVGSWAAKLISDKGGKIVAVSDVTGAIKNNNGIDILSLLEHAEENRGIKGFDGADSIDPDSILVEDCDILVPAALGGVINRENANEIKAKFIIEGANHPTDPEADEILKKKGVMILPDIYANSGGVTVSYFEWVQNIQGFMWDEEKVNRELKTYMTRGFKDLKEMCQTHSCDLRMGAFTLGINRVAQATTIRGWGS</sequence>
<dbReference type="EC" id="1.4.1.3"/>
<dbReference type="EMBL" id="AC009540">
    <property type="protein sequence ID" value="AAF00627.1"/>
    <property type="molecule type" value="Genomic_DNA"/>
</dbReference>
<dbReference type="EMBL" id="AC011698">
    <property type="protein sequence ID" value="AAF05851.1"/>
    <property type="molecule type" value="Genomic_DNA"/>
</dbReference>
<dbReference type="EMBL" id="CP002686">
    <property type="protein sequence ID" value="AEE74011.1"/>
    <property type="molecule type" value="Genomic_DNA"/>
</dbReference>
<dbReference type="RefSeq" id="NP_187041.1">
    <property type="nucleotide sequence ID" value="NM_111262.2"/>
</dbReference>
<dbReference type="SMR" id="Q9S7A0"/>
<dbReference type="BioGRID" id="6405">
    <property type="interactions" value="5"/>
</dbReference>
<dbReference type="FunCoup" id="Q9S7A0">
    <property type="interactions" value="1480"/>
</dbReference>
<dbReference type="STRING" id="3702.Q9S7A0"/>
<dbReference type="iPTMnet" id="Q9S7A0"/>
<dbReference type="PaxDb" id="3702-AT3G03910.1"/>
<dbReference type="ProteomicsDB" id="224243"/>
<dbReference type="EnsemblPlants" id="AT3G03910.1">
    <property type="protein sequence ID" value="AT3G03910.1"/>
    <property type="gene ID" value="AT3G03910"/>
</dbReference>
<dbReference type="GeneID" id="821072"/>
<dbReference type="Gramene" id="AT3G03910.1">
    <property type="protein sequence ID" value="AT3G03910.1"/>
    <property type="gene ID" value="AT3G03910"/>
</dbReference>
<dbReference type="KEGG" id="ath:AT3G03910"/>
<dbReference type="Araport" id="AT3G03910"/>
<dbReference type="TAIR" id="AT3G03910">
    <property type="gene designation" value="GDH3"/>
</dbReference>
<dbReference type="eggNOG" id="KOG2250">
    <property type="taxonomic scope" value="Eukaryota"/>
</dbReference>
<dbReference type="HOGENOM" id="CLU_025763_1_2_1"/>
<dbReference type="InParanoid" id="Q9S7A0"/>
<dbReference type="OMA" id="FNAYRVQ"/>
<dbReference type="OrthoDB" id="6718861at2759"/>
<dbReference type="PhylomeDB" id="Q9S7A0"/>
<dbReference type="BioCyc" id="ARA:AT3G03910-MONOMER"/>
<dbReference type="BRENDA" id="1.4.1.3">
    <property type="organism ID" value="399"/>
</dbReference>
<dbReference type="PRO" id="PR:Q9S7A0"/>
<dbReference type="Proteomes" id="UP000006548">
    <property type="component" value="Chromosome 3"/>
</dbReference>
<dbReference type="ExpressionAtlas" id="Q9S7A0">
    <property type="expression patterns" value="baseline and differential"/>
</dbReference>
<dbReference type="GO" id="GO:0005829">
    <property type="term" value="C:cytosol"/>
    <property type="evidence" value="ECO:0007005"/>
    <property type="project" value="TAIR"/>
</dbReference>
<dbReference type="GO" id="GO:0005739">
    <property type="term" value="C:mitochondrion"/>
    <property type="evidence" value="ECO:0007005"/>
    <property type="project" value="TAIR"/>
</dbReference>
<dbReference type="GO" id="GO:0004352">
    <property type="term" value="F:glutamate dehydrogenase (NAD+) activity"/>
    <property type="evidence" value="ECO:0007669"/>
    <property type="project" value="RHEA"/>
</dbReference>
<dbReference type="GO" id="GO:0004354">
    <property type="term" value="F:glutamate dehydrogenase (NADP+) activity"/>
    <property type="evidence" value="ECO:0007669"/>
    <property type="project" value="RHEA"/>
</dbReference>
<dbReference type="GO" id="GO:0006520">
    <property type="term" value="P:amino acid metabolic process"/>
    <property type="evidence" value="ECO:0007669"/>
    <property type="project" value="InterPro"/>
</dbReference>
<dbReference type="CDD" id="cd01076">
    <property type="entry name" value="NAD_bind_1_Glu_DH"/>
    <property type="match status" value="1"/>
</dbReference>
<dbReference type="FunFam" id="3.40.50.10860:FF:000003">
    <property type="entry name" value="Glutamate dehydrogenase"/>
    <property type="match status" value="1"/>
</dbReference>
<dbReference type="FunFam" id="3.40.50.720:FF:000212">
    <property type="entry name" value="Glutamate dehydrogenase"/>
    <property type="match status" value="1"/>
</dbReference>
<dbReference type="Gene3D" id="3.40.50.10860">
    <property type="entry name" value="Leucine Dehydrogenase, chain A, domain 1"/>
    <property type="match status" value="1"/>
</dbReference>
<dbReference type="Gene3D" id="3.40.50.720">
    <property type="entry name" value="NAD(P)-binding Rossmann-like Domain"/>
    <property type="match status" value="1"/>
</dbReference>
<dbReference type="InterPro" id="IPR046346">
    <property type="entry name" value="Aminoacid_DH-like_N_sf"/>
</dbReference>
<dbReference type="InterPro" id="IPR006095">
    <property type="entry name" value="Glu/Leu/Phe/Val/Trp_DH"/>
</dbReference>
<dbReference type="InterPro" id="IPR006096">
    <property type="entry name" value="Glu/Leu/Phe/Val/Trp_DH_C"/>
</dbReference>
<dbReference type="InterPro" id="IPR006097">
    <property type="entry name" value="Glu/Leu/Phe/Val/Trp_DH_dimer"/>
</dbReference>
<dbReference type="InterPro" id="IPR033524">
    <property type="entry name" value="Glu/Leu/Phe/Val_DH_AS"/>
</dbReference>
<dbReference type="InterPro" id="IPR014362">
    <property type="entry name" value="Glu_DH"/>
</dbReference>
<dbReference type="InterPro" id="IPR036291">
    <property type="entry name" value="NAD(P)-bd_dom_sf"/>
</dbReference>
<dbReference type="InterPro" id="IPR033922">
    <property type="entry name" value="NAD_bind_Glu_DH"/>
</dbReference>
<dbReference type="PANTHER" id="PTHR11606">
    <property type="entry name" value="GLUTAMATE DEHYDROGENASE"/>
    <property type="match status" value="1"/>
</dbReference>
<dbReference type="PANTHER" id="PTHR11606:SF29">
    <property type="entry name" value="GLUTAMATE DEHYDROGENASE 3-RELATED"/>
    <property type="match status" value="1"/>
</dbReference>
<dbReference type="Pfam" id="PF00208">
    <property type="entry name" value="ELFV_dehydrog"/>
    <property type="match status" value="1"/>
</dbReference>
<dbReference type="Pfam" id="PF02812">
    <property type="entry name" value="ELFV_dehydrog_N"/>
    <property type="match status" value="1"/>
</dbReference>
<dbReference type="PIRSF" id="PIRSF000185">
    <property type="entry name" value="Glu_DH"/>
    <property type="match status" value="1"/>
</dbReference>
<dbReference type="PRINTS" id="PR00082">
    <property type="entry name" value="GLFDHDRGNASE"/>
</dbReference>
<dbReference type="SMART" id="SM00839">
    <property type="entry name" value="ELFV_dehydrog"/>
    <property type="match status" value="1"/>
</dbReference>
<dbReference type="SUPFAM" id="SSF53223">
    <property type="entry name" value="Aminoacid dehydrogenase-like, N-terminal domain"/>
    <property type="match status" value="1"/>
</dbReference>
<dbReference type="SUPFAM" id="SSF51735">
    <property type="entry name" value="NAD(P)-binding Rossmann-fold domains"/>
    <property type="match status" value="1"/>
</dbReference>
<dbReference type="PROSITE" id="PS00074">
    <property type="entry name" value="GLFV_DEHYDROGENASE"/>
    <property type="match status" value="1"/>
</dbReference>
<keyword id="KW-0520">NAD</keyword>
<keyword id="KW-0560">Oxidoreductase</keyword>
<keyword id="KW-1185">Reference proteome</keyword>
<proteinExistence type="inferred from homology"/>
<protein>
    <recommendedName>
        <fullName>Probable glutamate dehydrogenase 3</fullName>
        <shortName>GDH 3</shortName>
        <ecNumber>1.4.1.3</ecNumber>
    </recommendedName>
</protein>
<organism>
    <name type="scientific">Arabidopsis thaliana</name>
    <name type="common">Mouse-ear cress</name>
    <dbReference type="NCBI Taxonomy" id="3702"/>
    <lineage>
        <taxon>Eukaryota</taxon>
        <taxon>Viridiplantae</taxon>
        <taxon>Streptophyta</taxon>
        <taxon>Embryophyta</taxon>
        <taxon>Tracheophyta</taxon>
        <taxon>Spermatophyta</taxon>
        <taxon>Magnoliopsida</taxon>
        <taxon>eudicotyledons</taxon>
        <taxon>Gunneridae</taxon>
        <taxon>Pentapetalae</taxon>
        <taxon>rosids</taxon>
        <taxon>malvids</taxon>
        <taxon>Brassicales</taxon>
        <taxon>Brassicaceae</taxon>
        <taxon>Camelineae</taxon>
        <taxon>Arabidopsis</taxon>
    </lineage>
</organism>
<reference key="1">
    <citation type="journal article" date="2000" name="Nature">
        <title>Sequence and analysis of chromosome 3 of the plant Arabidopsis thaliana.</title>
        <authorList>
            <person name="Salanoubat M."/>
            <person name="Lemcke K."/>
            <person name="Rieger M."/>
            <person name="Ansorge W."/>
            <person name="Unseld M."/>
            <person name="Fartmann B."/>
            <person name="Valle G."/>
            <person name="Bloecker H."/>
            <person name="Perez-Alonso M."/>
            <person name="Obermaier B."/>
            <person name="Delseny M."/>
            <person name="Boutry M."/>
            <person name="Grivell L.A."/>
            <person name="Mache R."/>
            <person name="Puigdomenech P."/>
            <person name="De Simone V."/>
            <person name="Choisne N."/>
            <person name="Artiguenave F."/>
            <person name="Robert C."/>
            <person name="Brottier P."/>
            <person name="Wincker P."/>
            <person name="Cattolico L."/>
            <person name="Weissenbach J."/>
            <person name="Saurin W."/>
            <person name="Quetier F."/>
            <person name="Schaefer M."/>
            <person name="Mueller-Auer S."/>
            <person name="Gabel C."/>
            <person name="Fuchs M."/>
            <person name="Benes V."/>
            <person name="Wurmbach E."/>
            <person name="Drzonek H."/>
            <person name="Erfle H."/>
            <person name="Jordan N."/>
            <person name="Bangert S."/>
            <person name="Wiedelmann R."/>
            <person name="Kranz H."/>
            <person name="Voss H."/>
            <person name="Holland R."/>
            <person name="Brandt P."/>
            <person name="Nyakatura G."/>
            <person name="Vezzi A."/>
            <person name="D'Angelo M."/>
            <person name="Pallavicini A."/>
            <person name="Toppo S."/>
            <person name="Simionati B."/>
            <person name="Conrad A."/>
            <person name="Hornischer K."/>
            <person name="Kauer G."/>
            <person name="Loehnert T.-H."/>
            <person name="Nordsiek G."/>
            <person name="Reichelt J."/>
            <person name="Scharfe M."/>
            <person name="Schoen O."/>
            <person name="Bargues M."/>
            <person name="Terol J."/>
            <person name="Climent J."/>
            <person name="Navarro P."/>
            <person name="Collado C."/>
            <person name="Perez-Perez A."/>
            <person name="Ottenwaelder B."/>
            <person name="Duchemin D."/>
            <person name="Cooke R."/>
            <person name="Laudie M."/>
            <person name="Berger-Llauro C."/>
            <person name="Purnelle B."/>
            <person name="Masuy D."/>
            <person name="de Haan M."/>
            <person name="Maarse A.C."/>
            <person name="Alcaraz J.-P."/>
            <person name="Cottet A."/>
            <person name="Casacuberta E."/>
            <person name="Monfort A."/>
            <person name="Argiriou A."/>
            <person name="Flores M."/>
            <person name="Liguori R."/>
            <person name="Vitale D."/>
            <person name="Mannhaupt G."/>
            <person name="Haase D."/>
            <person name="Schoof H."/>
            <person name="Rudd S."/>
            <person name="Zaccaria P."/>
            <person name="Mewes H.-W."/>
            <person name="Mayer K.F.X."/>
            <person name="Kaul S."/>
            <person name="Town C.D."/>
            <person name="Koo H.L."/>
            <person name="Tallon L.J."/>
            <person name="Jenkins J."/>
            <person name="Rooney T."/>
            <person name="Rizzo M."/>
            <person name="Walts A."/>
            <person name="Utterback T."/>
            <person name="Fujii C.Y."/>
            <person name="Shea T.P."/>
            <person name="Creasy T.H."/>
            <person name="Haas B."/>
            <person name="Maiti R."/>
            <person name="Wu D."/>
            <person name="Peterson J."/>
            <person name="Van Aken S."/>
            <person name="Pai G."/>
            <person name="Militscher J."/>
            <person name="Sellers P."/>
            <person name="Gill J.E."/>
            <person name="Feldblyum T.V."/>
            <person name="Preuss D."/>
            <person name="Lin X."/>
            <person name="Nierman W.C."/>
            <person name="Salzberg S.L."/>
            <person name="White O."/>
            <person name="Venter J.C."/>
            <person name="Fraser C.M."/>
            <person name="Kaneko T."/>
            <person name="Nakamura Y."/>
            <person name="Sato S."/>
            <person name="Kato T."/>
            <person name="Asamizu E."/>
            <person name="Sasamoto S."/>
            <person name="Kimura T."/>
            <person name="Idesawa K."/>
            <person name="Kawashima K."/>
            <person name="Kishida Y."/>
            <person name="Kiyokawa C."/>
            <person name="Kohara M."/>
            <person name="Matsumoto M."/>
            <person name="Matsuno A."/>
            <person name="Muraki A."/>
            <person name="Nakayama S."/>
            <person name="Nakazaki N."/>
            <person name="Shinpo S."/>
            <person name="Takeuchi C."/>
            <person name="Wada T."/>
            <person name="Watanabe A."/>
            <person name="Yamada M."/>
            <person name="Yasuda M."/>
            <person name="Tabata S."/>
        </authorList>
    </citation>
    <scope>NUCLEOTIDE SEQUENCE [LARGE SCALE GENOMIC DNA]</scope>
    <source>
        <strain>cv. Columbia</strain>
    </source>
</reference>
<reference key="2">
    <citation type="journal article" date="2017" name="Plant J.">
        <title>Araport11: a complete reannotation of the Arabidopsis thaliana reference genome.</title>
        <authorList>
            <person name="Cheng C.Y."/>
            <person name="Krishnakumar V."/>
            <person name="Chan A.P."/>
            <person name="Thibaud-Nissen F."/>
            <person name="Schobel S."/>
            <person name="Town C.D."/>
        </authorList>
    </citation>
    <scope>GENOME REANNOTATION</scope>
    <source>
        <strain>cv. Columbia</strain>
    </source>
</reference>
<comment type="catalytic activity">
    <reaction evidence="1">
        <text>L-glutamate + NAD(+) + H2O = 2-oxoglutarate + NH4(+) + NADH + H(+)</text>
        <dbReference type="Rhea" id="RHEA:15133"/>
        <dbReference type="ChEBI" id="CHEBI:15377"/>
        <dbReference type="ChEBI" id="CHEBI:15378"/>
        <dbReference type="ChEBI" id="CHEBI:16810"/>
        <dbReference type="ChEBI" id="CHEBI:28938"/>
        <dbReference type="ChEBI" id="CHEBI:29985"/>
        <dbReference type="ChEBI" id="CHEBI:57540"/>
        <dbReference type="ChEBI" id="CHEBI:57945"/>
        <dbReference type="EC" id="1.4.1.3"/>
    </reaction>
</comment>
<comment type="catalytic activity">
    <reaction evidence="1">
        <text>L-glutamate + NADP(+) + H2O = 2-oxoglutarate + NH4(+) + NADPH + H(+)</text>
        <dbReference type="Rhea" id="RHEA:11612"/>
        <dbReference type="ChEBI" id="CHEBI:15377"/>
        <dbReference type="ChEBI" id="CHEBI:15378"/>
        <dbReference type="ChEBI" id="CHEBI:16810"/>
        <dbReference type="ChEBI" id="CHEBI:28938"/>
        <dbReference type="ChEBI" id="CHEBI:29985"/>
        <dbReference type="ChEBI" id="CHEBI:57783"/>
        <dbReference type="ChEBI" id="CHEBI:58349"/>
        <dbReference type="EC" id="1.4.1.3"/>
    </reaction>
</comment>
<comment type="similarity">
    <text evidence="2">Belongs to the Glu/Leu/Phe/Val dehydrogenases family.</text>
</comment>
<accession>Q9S7A0</accession>